<name>AAEB_SALPA</name>
<reference key="1">
    <citation type="journal article" date="2004" name="Nat. Genet.">
        <title>Comparison of genome degradation in Paratyphi A and Typhi, human-restricted serovars of Salmonella enterica that cause typhoid.</title>
        <authorList>
            <person name="McClelland M."/>
            <person name="Sanderson K.E."/>
            <person name="Clifton S.W."/>
            <person name="Latreille P."/>
            <person name="Porwollik S."/>
            <person name="Sabo A."/>
            <person name="Meyer R."/>
            <person name="Bieri T."/>
            <person name="Ozersky P."/>
            <person name="McLellan M."/>
            <person name="Harkins C.R."/>
            <person name="Wang C."/>
            <person name="Nguyen C."/>
            <person name="Berghoff A."/>
            <person name="Elliott G."/>
            <person name="Kohlberg S."/>
            <person name="Strong C."/>
            <person name="Du F."/>
            <person name="Carter J."/>
            <person name="Kremizki C."/>
            <person name="Layman D."/>
            <person name="Leonard S."/>
            <person name="Sun H."/>
            <person name="Fulton L."/>
            <person name="Nash W."/>
            <person name="Miner T."/>
            <person name="Minx P."/>
            <person name="Delehaunty K."/>
            <person name="Fronick C."/>
            <person name="Magrini V."/>
            <person name="Nhan M."/>
            <person name="Warren W."/>
            <person name="Florea L."/>
            <person name="Spieth J."/>
            <person name="Wilson R.K."/>
        </authorList>
    </citation>
    <scope>NUCLEOTIDE SEQUENCE [LARGE SCALE GENOMIC DNA]</scope>
    <source>
        <strain>ATCC 9150 / SARB42</strain>
    </source>
</reference>
<protein>
    <recommendedName>
        <fullName evidence="2">p-hydroxybenzoic acid efflux pump subunit AaeB</fullName>
        <shortName evidence="2">pHBA efflux pump protein B</shortName>
    </recommendedName>
</protein>
<keyword id="KW-0997">Cell inner membrane</keyword>
<keyword id="KW-1003">Cell membrane</keyword>
<keyword id="KW-0472">Membrane</keyword>
<keyword id="KW-0812">Transmembrane</keyword>
<keyword id="KW-1133">Transmembrane helix</keyword>
<keyword id="KW-0813">Transport</keyword>
<dbReference type="EMBL" id="CP000026">
    <property type="protein sequence ID" value="AAV79054.1"/>
    <property type="molecule type" value="Genomic_DNA"/>
</dbReference>
<dbReference type="RefSeq" id="WP_000510916.1">
    <property type="nucleotide sequence ID" value="NC_006511.1"/>
</dbReference>
<dbReference type="SMR" id="Q5PJT9"/>
<dbReference type="KEGG" id="spt:SPA3231"/>
<dbReference type="HOGENOM" id="CLU_027647_0_0_6"/>
<dbReference type="Proteomes" id="UP000008185">
    <property type="component" value="Chromosome"/>
</dbReference>
<dbReference type="GO" id="GO:0005886">
    <property type="term" value="C:plasma membrane"/>
    <property type="evidence" value="ECO:0007669"/>
    <property type="project" value="UniProtKB-SubCell"/>
</dbReference>
<dbReference type="GO" id="GO:0022857">
    <property type="term" value="F:transmembrane transporter activity"/>
    <property type="evidence" value="ECO:0007669"/>
    <property type="project" value="UniProtKB-UniRule"/>
</dbReference>
<dbReference type="GO" id="GO:0046942">
    <property type="term" value="P:carboxylic acid transport"/>
    <property type="evidence" value="ECO:0007669"/>
    <property type="project" value="InterPro"/>
</dbReference>
<dbReference type="HAMAP" id="MF_01545">
    <property type="entry name" value="AaeB"/>
    <property type="match status" value="1"/>
</dbReference>
<dbReference type="InterPro" id="IPR006726">
    <property type="entry name" value="PHBA_efflux_AaeB/fusaric-R"/>
</dbReference>
<dbReference type="InterPro" id="IPR023706">
    <property type="entry name" value="PHBA_efflux_pump_AaeB"/>
</dbReference>
<dbReference type="NCBIfam" id="NF007916">
    <property type="entry name" value="PRK10631.1"/>
    <property type="match status" value="1"/>
</dbReference>
<dbReference type="PANTHER" id="PTHR30509:SF9">
    <property type="entry name" value="MULTIDRUG RESISTANCE PROTEIN MDTO"/>
    <property type="match status" value="1"/>
</dbReference>
<dbReference type="PANTHER" id="PTHR30509">
    <property type="entry name" value="P-HYDROXYBENZOIC ACID EFFLUX PUMP SUBUNIT-RELATED"/>
    <property type="match status" value="1"/>
</dbReference>
<dbReference type="Pfam" id="PF04632">
    <property type="entry name" value="FUSC"/>
    <property type="match status" value="1"/>
</dbReference>
<comment type="function">
    <text evidence="2">Forms an efflux pump with AaeA. Could function as a metabolic relief valve, allowing to eliminate certain compounds when they accumulate to high levels in the cell.</text>
</comment>
<comment type="subcellular location">
    <subcellularLocation>
        <location evidence="2">Cell inner membrane</location>
        <topology evidence="2">Multi-pass membrane protein</topology>
    </subcellularLocation>
</comment>
<comment type="similarity">
    <text evidence="2">Belongs to the aromatic acid exporter ArAE (TC 2.A.85) family.</text>
</comment>
<accession>Q5PJT9</accession>
<evidence type="ECO:0000255" key="1"/>
<evidence type="ECO:0000255" key="2">
    <source>
        <dbReference type="HAMAP-Rule" id="MF_01545"/>
    </source>
</evidence>
<proteinExistence type="inferred from homology"/>
<gene>
    <name evidence="2" type="primary">aaeB</name>
    <name type="ordered locus">SPA3231</name>
</gene>
<organism>
    <name type="scientific">Salmonella paratyphi A (strain ATCC 9150 / SARB42)</name>
    <dbReference type="NCBI Taxonomy" id="295319"/>
    <lineage>
        <taxon>Bacteria</taxon>
        <taxon>Pseudomonadati</taxon>
        <taxon>Pseudomonadota</taxon>
        <taxon>Gammaproteobacteria</taxon>
        <taxon>Enterobacterales</taxon>
        <taxon>Enterobacteriaceae</taxon>
        <taxon>Salmonella</taxon>
    </lineage>
</organism>
<sequence>MGIFSIANQHIRFAVKLACAIVLALFIGFHFQLETPRWAVLTAAIVAAGPAFAAGGEPYSGAIRYRGMLRIIGTFIGCIAALIIIISMIRAPLLMILVCCVWVGFCTWISSLVRIENSYAWGLSGYTALIIVITIQTEPLLTPQFALERCSEIVIGIGCAILADLLFSPRSIKQEVDRELDSLLVAQYQLMQLCIKHGDSEEVDNAWGDLVRRTAALEGMRSNLNMESSRWVRANRRLKALNTLSLTLITQSCETYLIQNTRPELITDTFRELFETPVETVQDVHRQLKRMRRVIVWTGERETPVTLYSWVGAATRYLLLKRGVISNTKISATEEEILQGEPVVKVESAERHHAMVNFWRTTLSCILGTLFWLWTGWTSGNGEMVMIAVVTSLAMRLPNPRMVCIDFIYGTLAALPLGLLYFLVIIPNTQQSMLLLCLSLAVLGFFIGIEVQKRRLGSMGALASTINIIVLDNPMTFHFSQFLDSALGQIVGCMLAFIVILLVRDKSKDRTGRVLLNQFVSAAVSAMTTNVVRRKENRLPALYQQLFLLMNKFPGDLPKFRLALTMIIAHQRLRDAPIPVNEDLSVFHRQLRRTADHVISAGSDDKRRRYFGQLLDELDIYQEKLRIWEAPPQVTEPVKRLTGMLHKYQNALTDS</sequence>
<feature type="chain" id="PRO_0000210082" description="p-hydroxybenzoic acid efflux pump subunit AaeB">
    <location>
        <begin position="1"/>
        <end position="655"/>
    </location>
</feature>
<feature type="topological domain" description="Periplasmic" evidence="1">
    <location>
        <begin position="1"/>
        <end position="12"/>
    </location>
</feature>
<feature type="transmembrane region" description="Helical" evidence="2">
    <location>
        <begin position="13"/>
        <end position="33"/>
    </location>
</feature>
<feature type="topological domain" description="Cytoplasmic" evidence="1">
    <location>
        <begin position="34"/>
        <end position="37"/>
    </location>
</feature>
<feature type="transmembrane region" description="Helical" evidence="2">
    <location>
        <begin position="38"/>
        <end position="58"/>
    </location>
</feature>
<feature type="topological domain" description="Periplasmic" evidence="1">
    <location>
        <begin position="59"/>
        <end position="68"/>
    </location>
</feature>
<feature type="transmembrane region" description="Helical" evidence="2">
    <location>
        <begin position="69"/>
        <end position="89"/>
    </location>
</feature>
<feature type="topological domain" description="Cytoplasmic" evidence="1">
    <location>
        <begin position="90"/>
        <end position="92"/>
    </location>
</feature>
<feature type="transmembrane region" description="Helical" evidence="2">
    <location>
        <begin position="93"/>
        <end position="113"/>
    </location>
</feature>
<feature type="topological domain" description="Periplasmic" evidence="1">
    <location>
        <begin position="114"/>
        <end position="120"/>
    </location>
</feature>
<feature type="transmembrane region" description="Helical" evidence="2">
    <location>
        <begin position="121"/>
        <end position="141"/>
    </location>
</feature>
<feature type="topological domain" description="Cytoplasmic" evidence="1">
    <location>
        <begin position="142"/>
        <end position="151"/>
    </location>
</feature>
<feature type="transmembrane region" description="Helical" evidence="2">
    <location>
        <begin position="152"/>
        <end position="172"/>
    </location>
</feature>
<feature type="topological domain" description="Periplasmic" evidence="1">
    <location>
        <begin position="173"/>
        <end position="369"/>
    </location>
</feature>
<feature type="transmembrane region" description="Helical" evidence="2">
    <location>
        <begin position="370"/>
        <end position="390"/>
    </location>
</feature>
<feature type="topological domain" description="Cytoplasmic" evidence="1">
    <location>
        <begin position="391"/>
        <end position="406"/>
    </location>
</feature>
<feature type="transmembrane region" description="Helical" evidence="2">
    <location>
        <begin position="407"/>
        <end position="427"/>
    </location>
</feature>
<feature type="topological domain" description="Periplasmic" evidence="1">
    <location>
        <begin position="428"/>
        <end position="430"/>
    </location>
</feature>
<feature type="transmembrane region" description="Helical" evidence="2">
    <location>
        <begin position="431"/>
        <end position="451"/>
    </location>
</feature>
<feature type="topological domain" description="Cytoplasmic" evidence="1">
    <location>
        <begin position="452"/>
        <end position="458"/>
    </location>
</feature>
<feature type="transmembrane region" description="Helical" evidence="2">
    <location>
        <begin position="459"/>
        <end position="479"/>
    </location>
</feature>
<feature type="topological domain" description="Periplasmic" evidence="1">
    <location>
        <begin position="480"/>
        <end position="481"/>
    </location>
</feature>
<feature type="transmembrane region" description="Helical" evidence="2">
    <location>
        <begin position="482"/>
        <end position="502"/>
    </location>
</feature>
<feature type="topological domain" description="Cytoplasmic" evidence="1">
    <location>
        <begin position="503"/>
        <end position="655"/>
    </location>
</feature>